<reference key="1">
    <citation type="journal article" date="1992" name="FEBS Lett.">
        <title>Nucleotide sequence of the Staphylococcus aureus signal peptidase II (lsp) gene.</title>
        <authorList>
            <person name="Zhao X.-J."/>
            <person name="Wu H.C."/>
        </authorList>
    </citation>
    <scope>NUCLEOTIDE SEQUENCE [GENOMIC DNA]</scope>
</reference>
<feature type="chain" id="PRO_0000178818" description="Lipoprotein signal peptidase">
    <location>
        <begin position="1"/>
        <end position="163"/>
    </location>
</feature>
<feature type="transmembrane region" description="Helical" evidence="1">
    <location>
        <begin position="11"/>
        <end position="31"/>
    </location>
</feature>
<feature type="transmembrane region" description="Helical" evidence="1">
    <location>
        <begin position="63"/>
        <end position="83"/>
    </location>
</feature>
<feature type="transmembrane region" description="Helical" evidence="1">
    <location>
        <begin position="88"/>
        <end position="108"/>
    </location>
</feature>
<feature type="transmembrane region" description="Helical" evidence="1">
    <location>
        <begin position="131"/>
        <end position="151"/>
    </location>
</feature>
<feature type="active site" evidence="1">
    <location>
        <position position="118"/>
    </location>
</feature>
<feature type="active site" evidence="1">
    <location>
        <position position="136"/>
    </location>
</feature>
<accession>P31024</accession>
<organism>
    <name type="scientific">Staphylococcus aureus</name>
    <dbReference type="NCBI Taxonomy" id="1280"/>
    <lineage>
        <taxon>Bacteria</taxon>
        <taxon>Bacillati</taxon>
        <taxon>Bacillota</taxon>
        <taxon>Bacilli</taxon>
        <taxon>Bacillales</taxon>
        <taxon>Staphylococcaceae</taxon>
        <taxon>Staphylococcus</taxon>
    </lineage>
</organism>
<gene>
    <name evidence="1" type="primary">lspA</name>
    <name type="synonym">lsp</name>
</gene>
<dbReference type="EC" id="3.4.23.36" evidence="1"/>
<dbReference type="EMBL" id="M83994">
    <property type="protein sequence ID" value="AAA26653.1"/>
    <property type="molecule type" value="Genomic_DNA"/>
</dbReference>
<dbReference type="PIR" id="S20433">
    <property type="entry name" value="S20433"/>
</dbReference>
<dbReference type="RefSeq" id="WP_070985275.1">
    <property type="nucleotide sequence ID" value="NZ_MLQG01000004.1"/>
</dbReference>
<dbReference type="SMR" id="P31024"/>
<dbReference type="UniPathway" id="UPA00665"/>
<dbReference type="GO" id="GO:0005886">
    <property type="term" value="C:plasma membrane"/>
    <property type="evidence" value="ECO:0007669"/>
    <property type="project" value="UniProtKB-SubCell"/>
</dbReference>
<dbReference type="GO" id="GO:0004190">
    <property type="term" value="F:aspartic-type endopeptidase activity"/>
    <property type="evidence" value="ECO:0007669"/>
    <property type="project" value="UniProtKB-UniRule"/>
</dbReference>
<dbReference type="GO" id="GO:0006508">
    <property type="term" value="P:proteolysis"/>
    <property type="evidence" value="ECO:0007669"/>
    <property type="project" value="UniProtKB-KW"/>
</dbReference>
<dbReference type="HAMAP" id="MF_00161">
    <property type="entry name" value="LspA"/>
    <property type="match status" value="1"/>
</dbReference>
<dbReference type="InterPro" id="IPR001872">
    <property type="entry name" value="Peptidase_A8"/>
</dbReference>
<dbReference type="NCBIfam" id="TIGR00077">
    <property type="entry name" value="lspA"/>
    <property type="match status" value="1"/>
</dbReference>
<dbReference type="PANTHER" id="PTHR33695">
    <property type="entry name" value="LIPOPROTEIN SIGNAL PEPTIDASE"/>
    <property type="match status" value="1"/>
</dbReference>
<dbReference type="PANTHER" id="PTHR33695:SF1">
    <property type="entry name" value="LIPOPROTEIN SIGNAL PEPTIDASE"/>
    <property type="match status" value="1"/>
</dbReference>
<dbReference type="Pfam" id="PF01252">
    <property type="entry name" value="Peptidase_A8"/>
    <property type="match status" value="1"/>
</dbReference>
<dbReference type="PRINTS" id="PR00781">
    <property type="entry name" value="LIPOSIGPTASE"/>
</dbReference>
<dbReference type="PROSITE" id="PS00855">
    <property type="entry name" value="SPASE_II"/>
    <property type="match status" value="1"/>
</dbReference>
<name>LSPA_STAAU</name>
<sequence>MHKKYFIGTSILIAVFVVIFDQVTKYIIATTMKIGDSFEVIPHFLNITSHRNNGAAWGILSGKMTFFFIITIIILIALVYFFIKDAQYNLFMQVAISLLFAGALGNFIDRILTGEVVDFIDTNIFGYDFPIFNIADSSLTIGVILIIIALLKDTSNKKDKEVK</sequence>
<evidence type="ECO:0000255" key="1">
    <source>
        <dbReference type="HAMAP-Rule" id="MF_00161"/>
    </source>
</evidence>
<evidence type="ECO:0000305" key="2"/>
<proteinExistence type="inferred from homology"/>
<keyword id="KW-0064">Aspartyl protease</keyword>
<keyword id="KW-1003">Cell membrane</keyword>
<keyword id="KW-0378">Hydrolase</keyword>
<keyword id="KW-0472">Membrane</keyword>
<keyword id="KW-0645">Protease</keyword>
<keyword id="KW-0812">Transmembrane</keyword>
<keyword id="KW-1133">Transmembrane helix</keyword>
<protein>
    <recommendedName>
        <fullName evidence="1">Lipoprotein signal peptidase</fullName>
        <ecNumber evidence="1">3.4.23.36</ecNumber>
    </recommendedName>
    <alternativeName>
        <fullName evidence="1">Prolipoprotein signal peptidase</fullName>
    </alternativeName>
    <alternativeName>
        <fullName evidence="1">Signal peptidase II</fullName>
        <shortName evidence="1">SPase II</shortName>
    </alternativeName>
</protein>
<comment type="function">
    <text evidence="1">This protein specifically catalyzes the removal of signal peptides from prolipoproteins.</text>
</comment>
<comment type="catalytic activity">
    <reaction evidence="1">
        <text>Release of signal peptides from bacterial membrane prolipoproteins. Hydrolyzes -Xaa-Yaa-Zaa-|-(S,diacylglyceryl)Cys-, in which Xaa is hydrophobic (preferably Leu), and Yaa (Ala or Ser) and Zaa (Gly or Ala) have small, neutral side chains.</text>
        <dbReference type="EC" id="3.4.23.36"/>
    </reaction>
</comment>
<comment type="pathway">
    <text evidence="1">Protein modification; lipoprotein biosynthesis (signal peptide cleavage).</text>
</comment>
<comment type="subcellular location">
    <subcellularLocation>
        <location evidence="1">Cell membrane</location>
        <topology evidence="1">Multi-pass membrane protein</topology>
    </subcellularLocation>
</comment>
<comment type="similarity">
    <text evidence="1 2">Belongs to the peptidase A8 family.</text>
</comment>